<evidence type="ECO:0000255" key="1">
    <source>
        <dbReference type="HAMAP-Rule" id="MF_01042"/>
    </source>
</evidence>
<evidence type="ECO:0000256" key="2">
    <source>
        <dbReference type="SAM" id="MobiDB-lite"/>
    </source>
</evidence>
<keyword id="KW-0255">Endonuclease</keyword>
<keyword id="KW-0378">Hydrolase</keyword>
<keyword id="KW-0540">Nuclease</keyword>
<keyword id="KW-0694">RNA-binding</keyword>
<keyword id="KW-0699">rRNA-binding</keyword>
<proteinExistence type="inferred from homology"/>
<name>SMRB_VIBC3</name>
<reference key="1">
    <citation type="submission" date="2007-03" db="EMBL/GenBank/DDBJ databases">
        <authorList>
            <person name="Heidelberg J."/>
        </authorList>
    </citation>
    <scope>NUCLEOTIDE SEQUENCE [LARGE SCALE GENOMIC DNA]</scope>
    <source>
        <strain>ATCC 39541 / Classical Ogawa 395 / O395</strain>
    </source>
</reference>
<reference key="2">
    <citation type="journal article" date="2008" name="PLoS ONE">
        <title>A recalibrated molecular clock and independent origins for the cholera pandemic clones.</title>
        <authorList>
            <person name="Feng L."/>
            <person name="Reeves P.R."/>
            <person name="Lan R."/>
            <person name="Ren Y."/>
            <person name="Gao C."/>
            <person name="Zhou Z."/>
            <person name="Ren Y."/>
            <person name="Cheng J."/>
            <person name="Wang W."/>
            <person name="Wang J."/>
            <person name="Qian W."/>
            <person name="Li D."/>
            <person name="Wang L."/>
        </authorList>
    </citation>
    <scope>NUCLEOTIDE SEQUENCE [LARGE SCALE GENOMIC DNA]</scope>
    <source>
        <strain>ATCC 39541 / Classical Ogawa 395 / O395</strain>
    </source>
</reference>
<comment type="function">
    <text evidence="1">Acts as a ribosome collision sensor. Detects stalled/collided disomes (pairs of ribosomes where the leading ribosome is stalled and a second ribosome has collided with it) and endonucleolytically cleaves mRNA at the 5' boundary of the stalled ribosome. Stalled/collided disomes form a new interface (primarily via the 30S subunits) that binds SmrB. Cleaved mRNA becomes available for tmRNA ligation, leading to ribosomal subunit dissociation and rescue of stalled ribosomes.</text>
</comment>
<comment type="subunit">
    <text evidence="1">Associates with collided ribosomes, but not with correctly translating polysomes.</text>
</comment>
<comment type="similarity">
    <text evidence="1">Belongs to the SmrB family.</text>
</comment>
<gene>
    <name evidence="1" type="primary">smrB</name>
    <name type="ordered locus">VC0395_A1701</name>
    <name type="ordered locus">VC395_2233</name>
</gene>
<dbReference type="EC" id="3.1.-.-" evidence="1"/>
<dbReference type="EMBL" id="CP000627">
    <property type="protein sequence ID" value="ABQ20339.1"/>
    <property type="molecule type" value="Genomic_DNA"/>
</dbReference>
<dbReference type="EMBL" id="CP001235">
    <property type="protein sequence ID" value="ACP10225.1"/>
    <property type="molecule type" value="Genomic_DNA"/>
</dbReference>
<dbReference type="RefSeq" id="WP_000041521.1">
    <property type="nucleotide sequence ID" value="NZ_JAACZH010000001.1"/>
</dbReference>
<dbReference type="SMR" id="A5F6D7"/>
<dbReference type="KEGG" id="vco:VC0395_A1701"/>
<dbReference type="KEGG" id="vcr:VC395_2233"/>
<dbReference type="PATRIC" id="fig|345073.21.peg.2156"/>
<dbReference type="eggNOG" id="COG2840">
    <property type="taxonomic scope" value="Bacteria"/>
</dbReference>
<dbReference type="HOGENOM" id="CLU_055978_4_0_6"/>
<dbReference type="OrthoDB" id="5795446at2"/>
<dbReference type="Proteomes" id="UP000000249">
    <property type="component" value="Chromosome 2"/>
</dbReference>
<dbReference type="GO" id="GO:0004521">
    <property type="term" value="F:RNA endonuclease activity"/>
    <property type="evidence" value="ECO:0007669"/>
    <property type="project" value="UniProtKB-UniRule"/>
</dbReference>
<dbReference type="GO" id="GO:0019843">
    <property type="term" value="F:rRNA binding"/>
    <property type="evidence" value="ECO:0007669"/>
    <property type="project" value="UniProtKB-UniRule"/>
</dbReference>
<dbReference type="GO" id="GO:0072344">
    <property type="term" value="P:rescue of stalled ribosome"/>
    <property type="evidence" value="ECO:0007669"/>
    <property type="project" value="UniProtKB-UniRule"/>
</dbReference>
<dbReference type="Gene3D" id="3.30.1370.110">
    <property type="match status" value="1"/>
</dbReference>
<dbReference type="HAMAP" id="MF_01042">
    <property type="entry name" value="SmrB"/>
    <property type="match status" value="1"/>
</dbReference>
<dbReference type="InterPro" id="IPR002625">
    <property type="entry name" value="Smr_dom"/>
</dbReference>
<dbReference type="InterPro" id="IPR036063">
    <property type="entry name" value="Smr_dom_sf"/>
</dbReference>
<dbReference type="InterPro" id="IPR022990">
    <property type="entry name" value="SmrB-like"/>
</dbReference>
<dbReference type="NCBIfam" id="NF003432">
    <property type="entry name" value="PRK04946.1"/>
    <property type="match status" value="1"/>
</dbReference>
<dbReference type="PANTHER" id="PTHR35562">
    <property type="entry name" value="DNA ENDONUCLEASE SMRA-RELATED"/>
    <property type="match status" value="1"/>
</dbReference>
<dbReference type="PANTHER" id="PTHR35562:SF1">
    <property type="entry name" value="UPF0115 PROTEIN YFCN"/>
    <property type="match status" value="1"/>
</dbReference>
<dbReference type="Pfam" id="PF01713">
    <property type="entry name" value="Smr"/>
    <property type="match status" value="1"/>
</dbReference>
<dbReference type="SMART" id="SM00463">
    <property type="entry name" value="SMR"/>
    <property type="match status" value="1"/>
</dbReference>
<dbReference type="SUPFAM" id="SSF160443">
    <property type="entry name" value="SMR domain-like"/>
    <property type="match status" value="1"/>
</dbReference>
<dbReference type="PROSITE" id="PS50828">
    <property type="entry name" value="SMR"/>
    <property type="match status" value="1"/>
</dbReference>
<organism>
    <name type="scientific">Vibrio cholerae serotype O1 (strain ATCC 39541 / Classical Ogawa 395 / O395)</name>
    <dbReference type="NCBI Taxonomy" id="345073"/>
    <lineage>
        <taxon>Bacteria</taxon>
        <taxon>Pseudomonadati</taxon>
        <taxon>Pseudomonadota</taxon>
        <taxon>Gammaproteobacteria</taxon>
        <taxon>Vibrionales</taxon>
        <taxon>Vibrionaceae</taxon>
        <taxon>Vibrio</taxon>
    </lineage>
</organism>
<protein>
    <recommendedName>
        <fullName evidence="1">Ribosome rescue factor SmrB</fullName>
        <ecNumber evidence="1">3.1.-.-</ecNumber>
    </recommendedName>
</protein>
<accession>A5F6D7</accession>
<accession>C3M2V1</accession>
<sequence>MSKNDHRITHNKSDKDNLDDDFSLFRDEVKGVKKLRQDTILHAPNRNPKQKEIRRTEREASDNDFYFSDEFMPHLTDEGPTRYARSDVSKYEVKRLRRGVYVPDVFLDMHGMTQQEAKRELGAMIAYCLKENVHCACVQHGIGKHILKQNVPLWLAQHPDVLAFHQAPLEFGGDGALLVLLSIPEK</sequence>
<feature type="chain" id="PRO_1000084369" description="Ribosome rescue factor SmrB">
    <location>
        <begin position="1"/>
        <end position="186"/>
    </location>
</feature>
<feature type="domain" description="Smr" evidence="1">
    <location>
        <begin position="107"/>
        <end position="182"/>
    </location>
</feature>
<feature type="region of interest" description="Disordered" evidence="2">
    <location>
        <begin position="1"/>
        <end position="20"/>
    </location>
</feature>
<feature type="region of interest" description="Disordered" evidence="2">
    <location>
        <begin position="41"/>
        <end position="60"/>
    </location>
</feature>
<feature type="compositionally biased region" description="Basic and acidic residues" evidence="2">
    <location>
        <begin position="1"/>
        <end position="16"/>
    </location>
</feature>
<feature type="compositionally biased region" description="Basic and acidic residues" evidence="2">
    <location>
        <begin position="49"/>
        <end position="60"/>
    </location>
</feature>